<gene>
    <name evidence="7" type="primary">MRG1</name>
    <name evidence="10" type="ordered locus">At4g37280</name>
    <name evidence="12" type="ORF">C7A10.80</name>
</gene>
<name>MRG1_ARATH</name>
<protein>
    <recommendedName>
        <fullName evidence="7">Protein MRG1</fullName>
    </recommendedName>
    <alternativeName>
        <fullName evidence="7">MRG family protein 1</fullName>
    </alternativeName>
    <alternativeName>
        <fullName evidence="7">Morf Related Gene 1</fullName>
    </alternativeName>
</protein>
<accession>Q94C32</accession>
<accession>O23159</accession>
<reference key="1">
    <citation type="journal article" date="1998" name="Nature">
        <title>Analysis of 1.9 Mb of contiguous sequence from chromosome 4 of Arabidopsis thaliana.</title>
        <authorList>
            <person name="Bevan M."/>
            <person name="Bancroft I."/>
            <person name="Bent E."/>
            <person name="Love K."/>
            <person name="Goodman H.M."/>
            <person name="Dean C."/>
            <person name="Bergkamp R."/>
            <person name="Dirkse W."/>
            <person name="van Staveren M."/>
            <person name="Stiekema W."/>
            <person name="Drost L."/>
            <person name="Ridley P."/>
            <person name="Hudson S.-A."/>
            <person name="Patel K."/>
            <person name="Murphy G."/>
            <person name="Piffanelli P."/>
            <person name="Wedler H."/>
            <person name="Wedler E."/>
            <person name="Wambutt R."/>
            <person name="Weitzenegger T."/>
            <person name="Pohl T."/>
            <person name="Terryn N."/>
            <person name="Gielen J."/>
            <person name="Villarroel R."/>
            <person name="De Clercq R."/>
            <person name="van Montagu M."/>
            <person name="Lecharny A."/>
            <person name="Aubourg S."/>
            <person name="Gy I."/>
            <person name="Kreis M."/>
            <person name="Lao N."/>
            <person name="Kavanagh T."/>
            <person name="Hempel S."/>
            <person name="Kotter P."/>
            <person name="Entian K.-D."/>
            <person name="Rieger M."/>
            <person name="Schaefer M."/>
            <person name="Funk B."/>
            <person name="Mueller-Auer S."/>
            <person name="Silvey M."/>
            <person name="James R."/>
            <person name="Monfort A."/>
            <person name="Pons A."/>
            <person name="Puigdomenech P."/>
            <person name="Douka A."/>
            <person name="Voukelatou E."/>
            <person name="Milioni D."/>
            <person name="Hatzopoulos P."/>
            <person name="Piravandi E."/>
            <person name="Obermaier B."/>
            <person name="Hilbert H."/>
            <person name="Duesterhoeft A."/>
            <person name="Moores T."/>
            <person name="Jones J.D.G."/>
            <person name="Eneva T."/>
            <person name="Palme K."/>
            <person name="Benes V."/>
            <person name="Rechmann S."/>
            <person name="Ansorge W."/>
            <person name="Cooke R."/>
            <person name="Berger C."/>
            <person name="Delseny M."/>
            <person name="Voet M."/>
            <person name="Volckaert G."/>
            <person name="Mewes H.-W."/>
            <person name="Klosterman S."/>
            <person name="Schueller C."/>
            <person name="Chalwatzis N."/>
        </authorList>
    </citation>
    <scope>NUCLEOTIDE SEQUENCE [LARGE SCALE GENOMIC DNA]</scope>
    <source>
        <strain>cv. Columbia</strain>
    </source>
</reference>
<reference key="2">
    <citation type="journal article" date="1999" name="Nature">
        <title>Sequence and analysis of chromosome 4 of the plant Arabidopsis thaliana.</title>
        <authorList>
            <person name="Mayer K.F.X."/>
            <person name="Schueller C."/>
            <person name="Wambutt R."/>
            <person name="Murphy G."/>
            <person name="Volckaert G."/>
            <person name="Pohl T."/>
            <person name="Duesterhoeft A."/>
            <person name="Stiekema W."/>
            <person name="Entian K.-D."/>
            <person name="Terryn N."/>
            <person name="Harris B."/>
            <person name="Ansorge W."/>
            <person name="Brandt P."/>
            <person name="Grivell L.A."/>
            <person name="Rieger M."/>
            <person name="Weichselgartner M."/>
            <person name="de Simone V."/>
            <person name="Obermaier B."/>
            <person name="Mache R."/>
            <person name="Mueller M."/>
            <person name="Kreis M."/>
            <person name="Delseny M."/>
            <person name="Puigdomenech P."/>
            <person name="Watson M."/>
            <person name="Schmidtheini T."/>
            <person name="Reichert B."/>
            <person name="Portetelle D."/>
            <person name="Perez-Alonso M."/>
            <person name="Boutry M."/>
            <person name="Bancroft I."/>
            <person name="Vos P."/>
            <person name="Hoheisel J."/>
            <person name="Zimmermann W."/>
            <person name="Wedler H."/>
            <person name="Ridley P."/>
            <person name="Langham S.-A."/>
            <person name="McCullagh B."/>
            <person name="Bilham L."/>
            <person name="Robben J."/>
            <person name="van der Schueren J."/>
            <person name="Grymonprez B."/>
            <person name="Chuang Y.-J."/>
            <person name="Vandenbussche F."/>
            <person name="Braeken M."/>
            <person name="Weltjens I."/>
            <person name="Voet M."/>
            <person name="Bastiaens I."/>
            <person name="Aert R."/>
            <person name="Defoor E."/>
            <person name="Weitzenegger T."/>
            <person name="Bothe G."/>
            <person name="Ramsperger U."/>
            <person name="Hilbert H."/>
            <person name="Braun M."/>
            <person name="Holzer E."/>
            <person name="Brandt A."/>
            <person name="Peters S."/>
            <person name="van Staveren M."/>
            <person name="Dirkse W."/>
            <person name="Mooijman P."/>
            <person name="Klein Lankhorst R."/>
            <person name="Rose M."/>
            <person name="Hauf J."/>
            <person name="Koetter P."/>
            <person name="Berneiser S."/>
            <person name="Hempel S."/>
            <person name="Feldpausch M."/>
            <person name="Lamberth S."/>
            <person name="Van den Daele H."/>
            <person name="De Keyser A."/>
            <person name="Buysshaert C."/>
            <person name="Gielen J."/>
            <person name="Villarroel R."/>
            <person name="De Clercq R."/>
            <person name="van Montagu M."/>
            <person name="Rogers J."/>
            <person name="Cronin A."/>
            <person name="Quail M.A."/>
            <person name="Bray-Allen S."/>
            <person name="Clark L."/>
            <person name="Doggett J."/>
            <person name="Hall S."/>
            <person name="Kay M."/>
            <person name="Lennard N."/>
            <person name="McLay K."/>
            <person name="Mayes R."/>
            <person name="Pettett A."/>
            <person name="Rajandream M.A."/>
            <person name="Lyne M."/>
            <person name="Benes V."/>
            <person name="Rechmann S."/>
            <person name="Borkova D."/>
            <person name="Bloecker H."/>
            <person name="Scharfe M."/>
            <person name="Grimm M."/>
            <person name="Loehnert T.-H."/>
            <person name="Dose S."/>
            <person name="de Haan M."/>
            <person name="Maarse A.C."/>
            <person name="Schaefer M."/>
            <person name="Mueller-Auer S."/>
            <person name="Gabel C."/>
            <person name="Fuchs M."/>
            <person name="Fartmann B."/>
            <person name="Granderath K."/>
            <person name="Dauner D."/>
            <person name="Herzl A."/>
            <person name="Neumann S."/>
            <person name="Argiriou A."/>
            <person name="Vitale D."/>
            <person name="Liguori R."/>
            <person name="Piravandi E."/>
            <person name="Massenet O."/>
            <person name="Quigley F."/>
            <person name="Clabauld G."/>
            <person name="Muendlein A."/>
            <person name="Felber R."/>
            <person name="Schnabl S."/>
            <person name="Hiller R."/>
            <person name="Schmidt W."/>
            <person name="Lecharny A."/>
            <person name="Aubourg S."/>
            <person name="Chefdor F."/>
            <person name="Cooke R."/>
            <person name="Berger C."/>
            <person name="Monfort A."/>
            <person name="Casacuberta E."/>
            <person name="Gibbons T."/>
            <person name="Weber N."/>
            <person name="Vandenbol M."/>
            <person name="Bargues M."/>
            <person name="Terol J."/>
            <person name="Torres A."/>
            <person name="Perez-Perez A."/>
            <person name="Purnelle B."/>
            <person name="Bent E."/>
            <person name="Johnson S."/>
            <person name="Tacon D."/>
            <person name="Jesse T."/>
            <person name="Heijnen L."/>
            <person name="Schwarz S."/>
            <person name="Scholler P."/>
            <person name="Heber S."/>
            <person name="Francs P."/>
            <person name="Bielke C."/>
            <person name="Frishman D."/>
            <person name="Haase D."/>
            <person name="Lemcke K."/>
            <person name="Mewes H.-W."/>
            <person name="Stocker S."/>
            <person name="Zaccaria P."/>
            <person name="Bevan M."/>
            <person name="Wilson R.K."/>
            <person name="de la Bastide M."/>
            <person name="Habermann K."/>
            <person name="Parnell L."/>
            <person name="Dedhia N."/>
            <person name="Gnoj L."/>
            <person name="Schutz K."/>
            <person name="Huang E."/>
            <person name="Spiegel L."/>
            <person name="Sekhon M."/>
            <person name="Murray J."/>
            <person name="Sheet P."/>
            <person name="Cordes M."/>
            <person name="Abu-Threideh J."/>
            <person name="Stoneking T."/>
            <person name="Kalicki J."/>
            <person name="Graves T."/>
            <person name="Harmon G."/>
            <person name="Edwards J."/>
            <person name="Latreille P."/>
            <person name="Courtney L."/>
            <person name="Cloud J."/>
            <person name="Abbott A."/>
            <person name="Scott K."/>
            <person name="Johnson D."/>
            <person name="Minx P."/>
            <person name="Bentley D."/>
            <person name="Fulton B."/>
            <person name="Miller N."/>
            <person name="Greco T."/>
            <person name="Kemp K."/>
            <person name="Kramer J."/>
            <person name="Fulton L."/>
            <person name="Mardis E."/>
            <person name="Dante M."/>
            <person name="Pepin K."/>
            <person name="Hillier L.W."/>
            <person name="Nelson J."/>
            <person name="Spieth J."/>
            <person name="Ryan E."/>
            <person name="Andrews S."/>
            <person name="Geisel C."/>
            <person name="Layman D."/>
            <person name="Du H."/>
            <person name="Ali J."/>
            <person name="Berghoff A."/>
            <person name="Jones K."/>
            <person name="Drone K."/>
            <person name="Cotton M."/>
            <person name="Joshu C."/>
            <person name="Antonoiu B."/>
            <person name="Zidanic M."/>
            <person name="Strong C."/>
            <person name="Sun H."/>
            <person name="Lamar B."/>
            <person name="Yordan C."/>
            <person name="Ma P."/>
            <person name="Zhong J."/>
            <person name="Preston R."/>
            <person name="Vil D."/>
            <person name="Shekher M."/>
            <person name="Matero A."/>
            <person name="Shah R."/>
            <person name="Swaby I.K."/>
            <person name="O'Shaughnessy A."/>
            <person name="Rodriguez M."/>
            <person name="Hoffman J."/>
            <person name="Till S."/>
            <person name="Granat S."/>
            <person name="Shohdy N."/>
            <person name="Hasegawa A."/>
            <person name="Hameed A."/>
            <person name="Lodhi M."/>
            <person name="Johnson A."/>
            <person name="Chen E."/>
            <person name="Marra M.A."/>
            <person name="Martienssen R."/>
            <person name="McCombie W.R."/>
        </authorList>
    </citation>
    <scope>NUCLEOTIDE SEQUENCE [LARGE SCALE GENOMIC DNA]</scope>
    <source>
        <strain>cv. Columbia</strain>
    </source>
</reference>
<reference key="3">
    <citation type="journal article" date="2017" name="Plant J.">
        <title>Araport11: a complete reannotation of the Arabidopsis thaliana reference genome.</title>
        <authorList>
            <person name="Cheng C.Y."/>
            <person name="Krishnakumar V."/>
            <person name="Chan A.P."/>
            <person name="Thibaud-Nissen F."/>
            <person name="Schobel S."/>
            <person name="Town C.D."/>
        </authorList>
    </citation>
    <scope>GENOME REANNOTATION</scope>
    <source>
        <strain>cv. Columbia</strain>
    </source>
</reference>
<reference key="4">
    <citation type="journal article" date="2003" name="Science">
        <title>Empirical analysis of transcriptional activity in the Arabidopsis genome.</title>
        <authorList>
            <person name="Yamada K."/>
            <person name="Lim J."/>
            <person name="Dale J.M."/>
            <person name="Chen H."/>
            <person name="Shinn P."/>
            <person name="Palm C.J."/>
            <person name="Southwick A.M."/>
            <person name="Wu H.C."/>
            <person name="Kim C.J."/>
            <person name="Nguyen M."/>
            <person name="Pham P.K."/>
            <person name="Cheuk R.F."/>
            <person name="Karlin-Newmann G."/>
            <person name="Liu S.X."/>
            <person name="Lam B."/>
            <person name="Sakano H."/>
            <person name="Wu T."/>
            <person name="Yu G."/>
            <person name="Miranda M."/>
            <person name="Quach H.L."/>
            <person name="Tripp M."/>
            <person name="Chang C.H."/>
            <person name="Lee J.M."/>
            <person name="Toriumi M.J."/>
            <person name="Chan M.M."/>
            <person name="Tang C.C."/>
            <person name="Onodera C.S."/>
            <person name="Deng J.M."/>
            <person name="Akiyama K."/>
            <person name="Ansari Y."/>
            <person name="Arakawa T."/>
            <person name="Banh J."/>
            <person name="Banno F."/>
            <person name="Bowser L."/>
            <person name="Brooks S.Y."/>
            <person name="Carninci P."/>
            <person name="Chao Q."/>
            <person name="Choy N."/>
            <person name="Enju A."/>
            <person name="Goldsmith A.D."/>
            <person name="Gurjal M."/>
            <person name="Hansen N.F."/>
            <person name="Hayashizaki Y."/>
            <person name="Johnson-Hopson C."/>
            <person name="Hsuan V.W."/>
            <person name="Iida K."/>
            <person name="Karnes M."/>
            <person name="Khan S."/>
            <person name="Koesema E."/>
            <person name="Ishida J."/>
            <person name="Jiang P.X."/>
            <person name="Jones T."/>
            <person name="Kawai J."/>
            <person name="Kamiya A."/>
            <person name="Meyers C."/>
            <person name="Nakajima M."/>
            <person name="Narusaka M."/>
            <person name="Seki M."/>
            <person name="Sakurai T."/>
            <person name="Satou M."/>
            <person name="Tamse R."/>
            <person name="Vaysberg M."/>
            <person name="Wallender E.K."/>
            <person name="Wong C."/>
            <person name="Yamamura Y."/>
            <person name="Yuan S."/>
            <person name="Shinozaki K."/>
            <person name="Davis R.W."/>
            <person name="Theologis A."/>
            <person name="Ecker J.R."/>
        </authorList>
    </citation>
    <scope>NUCLEOTIDE SEQUENCE [LARGE SCALE MRNA]</scope>
    <source>
        <strain>cv. Columbia</strain>
    </source>
</reference>
<reference key="5">
    <citation type="journal article" date="2014" name="Nucleic Acids Res.">
        <title>Arabidopsis MRG domain proteins bridge two histone modifications to elevate expression of flowering genes.</title>
        <authorList>
            <person name="Xu Y."/>
            <person name="Gan E.S."/>
            <person name="Zhou J."/>
            <person name="Wee W.Y."/>
            <person name="Zhang X."/>
            <person name="Ito T."/>
        </authorList>
    </citation>
    <scope>FUNCTION</scope>
    <scope>DISRUPTION PHENOTYPE</scope>
    <scope>TISSUE SPECIFICITY</scope>
    <scope>SUBCELLULAR LOCATION</scope>
    <scope>INTERACTION WITH HAM1 AND HAM2</scope>
    <source>
        <strain>cv. Columbia</strain>
    </source>
</reference>
<reference key="6">
    <citation type="journal article" date="2014" name="PLoS Genet.">
        <title>Regulation of arabidopsis flowering by the histone mark readers MRG1/2 via interaction with CONSTANS to modulate FT expression.</title>
        <authorList>
            <person name="Bu Z."/>
            <person name="Yu Y."/>
            <person name="Li Z."/>
            <person name="Liu Y."/>
            <person name="Jiang W."/>
            <person name="Huang Y."/>
            <person name="Dong A.W."/>
        </authorList>
    </citation>
    <scope>FUNCTION</scope>
    <scope>DISRUPTION PHENOTYPE</scope>
    <scope>TISSUE SPECIFICITY</scope>
</reference>
<reference key="7">
    <citation type="journal article" date="2015" name="BMC Plant Biol.">
        <title>AtEAF1 is a potential platform protein for Arabidopsis NuA4 acetyltransferase complex.</title>
        <authorList>
            <person name="Bieluszewski T."/>
            <person name="Galganski L."/>
            <person name="Sura W."/>
            <person name="Bieluszewska A."/>
            <person name="Abram M."/>
            <person name="Ludwikow A."/>
            <person name="Ziolkowski P."/>
            <person name="Sadowski J."/>
        </authorList>
    </citation>
    <scope>IDENTIFICATION IN THE NUA4 COMPLEX</scope>
</reference>
<comment type="function">
    <text evidence="4 5 9">Chromatin remodeling factor. Acts as a 'reader' protein by binding to H3K36me3 and H3K36me3 to control histone H4 acetylation. Increases the transcriptional levels of the flowering time genes FLC and FT (PubMed:25183522, PubMed:25211338). Binds the chromatin at the FT promoter upon interaction with CO (Probable).</text>
</comment>
<comment type="subunit">
    <text evidence="4 6 9">Interacts with HAM1 and HAM2 (PubMed:25183522). Interacts (via MRG domain) with CO (Probable). Component of the NuA4 histone acetyltransferase complex (Ref.7).</text>
</comment>
<comment type="subcellular location">
    <subcellularLocation>
        <location evidence="4">Nucleus</location>
    </subcellularLocation>
    <text evidence="4">Localized only in the euchromatic regions.</text>
</comment>
<comment type="tissue specificity">
    <text evidence="4 5">Ubiquitous. Mainly expressed in the vasculature of cotyledons and leaves, and in roots and inflorescences (PubMed:25211338).</text>
</comment>
<comment type="disruption phenotype">
    <text evidence="4 5">No visible phenotype, due to the redundancy with MRG2. Mrg1 and mrg2 double mutants are late-flowering under long-day growth conditions.</text>
</comment>
<comment type="sequence caution" evidence="8">
    <conflict type="erroneous gene model prediction">
        <sequence resource="EMBL-CDS" id="CAB16772"/>
    </conflict>
</comment>
<comment type="sequence caution" evidence="8">
    <conflict type="erroneous gene model prediction">
        <sequence resource="EMBL-CDS" id="CAB80394"/>
    </conflict>
</comment>
<feature type="chain" id="PRO_0000432989" description="Protein MRG1">
    <location>
        <begin position="1"/>
        <end position="320"/>
    </location>
</feature>
<feature type="domain" description="Tudor-knot" evidence="1">
    <location>
        <begin position="30"/>
        <end position="80"/>
    </location>
</feature>
<feature type="domain" description="MRG" evidence="2">
    <location>
        <begin position="150"/>
        <end position="318"/>
    </location>
</feature>
<feature type="region of interest" description="Disordered" evidence="3">
    <location>
        <begin position="1"/>
        <end position="28"/>
    </location>
</feature>
<feature type="region of interest" description="Disordered" evidence="3">
    <location>
        <begin position="93"/>
        <end position="147"/>
    </location>
</feature>
<feature type="compositionally biased region" description="Polar residues" evidence="3">
    <location>
        <begin position="12"/>
        <end position="24"/>
    </location>
</feature>
<feature type="compositionally biased region" description="Basic and acidic residues" evidence="3">
    <location>
        <begin position="93"/>
        <end position="104"/>
    </location>
</feature>
<feature type="compositionally biased region" description="Polar residues" evidence="3">
    <location>
        <begin position="106"/>
        <end position="115"/>
    </location>
</feature>
<feature type="compositionally biased region" description="Basic and acidic residues" evidence="3">
    <location>
        <begin position="116"/>
        <end position="128"/>
    </location>
</feature>
<sequence>MGSSSKEETASDGDTASGGASPSNDGRLFSEGERVLAYHGPRVYGAKVQKVELRKKEWKYFVHYLGWNKNWDEWVSADRLLKHTEENLVKQKALDKKQGVEKGTKSGRSAQTKTRSSADTKADKDDTKTNAAKGKKRKHESGNEKDNVTAEKLMKIQIPASLKKQLTDDWEYIAQKDKVVKLPRSPNVDEILSKYLEFKTKKDGMVTDSVAEILKGIRSYFDKALPVMLLYKKERRQYQESIVDDTSPSTVYGAEHLLRLFVKLPDLFSYVNMEEETWSRMQQTLSDFLKFIQKNQSTFLLPSAYDSDKVSDGKGKGKDD</sequence>
<evidence type="ECO:0000255" key="1"/>
<evidence type="ECO:0000255" key="2">
    <source>
        <dbReference type="PROSITE-ProRule" id="PRU00972"/>
    </source>
</evidence>
<evidence type="ECO:0000256" key="3">
    <source>
        <dbReference type="SAM" id="MobiDB-lite"/>
    </source>
</evidence>
<evidence type="ECO:0000269" key="4">
    <source>
    </source>
</evidence>
<evidence type="ECO:0000269" key="5">
    <source>
    </source>
</evidence>
<evidence type="ECO:0000269" key="6">
    <source ref="7"/>
</evidence>
<evidence type="ECO:0000303" key="7">
    <source>
    </source>
</evidence>
<evidence type="ECO:0000305" key="8"/>
<evidence type="ECO:0000305" key="9">
    <source>
    </source>
</evidence>
<evidence type="ECO:0000312" key="10">
    <source>
        <dbReference type="Araport" id="AT4G37280"/>
    </source>
</evidence>
<evidence type="ECO:0000312" key="11">
    <source>
        <dbReference type="EMBL" id="AAK59778.1"/>
    </source>
</evidence>
<evidence type="ECO:0000312" key="12">
    <source>
        <dbReference type="EMBL" id="CAB16772.1"/>
    </source>
</evidence>
<organism evidence="11">
    <name type="scientific">Arabidopsis thaliana</name>
    <name type="common">Mouse-ear cress</name>
    <dbReference type="NCBI Taxonomy" id="3702"/>
    <lineage>
        <taxon>Eukaryota</taxon>
        <taxon>Viridiplantae</taxon>
        <taxon>Streptophyta</taxon>
        <taxon>Embryophyta</taxon>
        <taxon>Tracheophyta</taxon>
        <taxon>Spermatophyta</taxon>
        <taxon>Magnoliopsida</taxon>
        <taxon>eudicotyledons</taxon>
        <taxon>Gunneridae</taxon>
        <taxon>Pentapetalae</taxon>
        <taxon>rosids</taxon>
        <taxon>malvids</taxon>
        <taxon>Brassicales</taxon>
        <taxon>Brassicaceae</taxon>
        <taxon>Camelineae</taxon>
        <taxon>Arabidopsis</taxon>
    </lineage>
</organism>
<keyword id="KW-0156">Chromatin regulator</keyword>
<keyword id="KW-0539">Nucleus</keyword>
<keyword id="KW-1185">Reference proteome</keyword>
<keyword id="KW-0804">Transcription</keyword>
<keyword id="KW-0805">Transcription regulation</keyword>
<dbReference type="EMBL" id="Z99707">
    <property type="protein sequence ID" value="CAB16772.1"/>
    <property type="status" value="ALT_SEQ"/>
    <property type="molecule type" value="Genomic_DNA"/>
</dbReference>
<dbReference type="EMBL" id="AL161591">
    <property type="protein sequence ID" value="CAB80394.1"/>
    <property type="status" value="ALT_SEQ"/>
    <property type="molecule type" value="Genomic_DNA"/>
</dbReference>
<dbReference type="EMBL" id="CP002687">
    <property type="protein sequence ID" value="AEE86776.1"/>
    <property type="molecule type" value="Genomic_DNA"/>
</dbReference>
<dbReference type="EMBL" id="AY037193">
    <property type="protein sequence ID" value="AAK59778.1"/>
    <property type="molecule type" value="mRNA"/>
</dbReference>
<dbReference type="EMBL" id="AY142038">
    <property type="protein sequence ID" value="AAM98302.1"/>
    <property type="molecule type" value="mRNA"/>
</dbReference>
<dbReference type="PIR" id="E85440">
    <property type="entry name" value="E85440"/>
</dbReference>
<dbReference type="RefSeq" id="NP_568021.1">
    <property type="nucleotide sequence ID" value="NM_119891.4"/>
</dbReference>
<dbReference type="SMR" id="Q94C32"/>
<dbReference type="FunCoup" id="Q94C32">
    <property type="interactions" value="3574"/>
</dbReference>
<dbReference type="IntAct" id="Q94C32">
    <property type="interactions" value="1"/>
</dbReference>
<dbReference type="STRING" id="3702.Q94C32"/>
<dbReference type="iPTMnet" id="Q94C32"/>
<dbReference type="PaxDb" id="3702-AT4G37280.1"/>
<dbReference type="ProteomicsDB" id="239078"/>
<dbReference type="EnsemblPlants" id="AT4G37280.1">
    <property type="protein sequence ID" value="AT4G37280.1"/>
    <property type="gene ID" value="AT4G37280"/>
</dbReference>
<dbReference type="GeneID" id="829882"/>
<dbReference type="Gramene" id="AT4G37280.1">
    <property type="protein sequence ID" value="AT4G37280.1"/>
    <property type="gene ID" value="AT4G37280"/>
</dbReference>
<dbReference type="KEGG" id="ath:AT4G37280"/>
<dbReference type="Araport" id="AT4G37280"/>
<dbReference type="TAIR" id="AT4G37280">
    <property type="gene designation" value="MRG1"/>
</dbReference>
<dbReference type="eggNOG" id="KOG3001">
    <property type="taxonomic scope" value="Eukaryota"/>
</dbReference>
<dbReference type="HOGENOM" id="CLU_039566_1_0_1"/>
<dbReference type="InParanoid" id="Q94C32"/>
<dbReference type="OMA" id="GLQTYFD"/>
<dbReference type="PhylomeDB" id="Q94C32"/>
<dbReference type="PRO" id="PR:Q94C32"/>
<dbReference type="Proteomes" id="UP000006548">
    <property type="component" value="Chromosome 4"/>
</dbReference>
<dbReference type="ExpressionAtlas" id="Q94C32">
    <property type="expression patterns" value="baseline and differential"/>
</dbReference>
<dbReference type="GO" id="GO:0005634">
    <property type="term" value="C:nucleus"/>
    <property type="evidence" value="ECO:0007669"/>
    <property type="project" value="UniProtKB-SubCell"/>
</dbReference>
<dbReference type="GO" id="GO:0035064">
    <property type="term" value="F:methylated histone binding"/>
    <property type="evidence" value="ECO:0000314"/>
    <property type="project" value="TAIR"/>
</dbReference>
<dbReference type="GO" id="GO:1990841">
    <property type="term" value="F:promoter-specific chromatin binding"/>
    <property type="evidence" value="ECO:0000353"/>
    <property type="project" value="TAIR"/>
</dbReference>
<dbReference type="GO" id="GO:0006325">
    <property type="term" value="P:chromatin organization"/>
    <property type="evidence" value="ECO:0007669"/>
    <property type="project" value="UniProtKB-KW"/>
</dbReference>
<dbReference type="GO" id="GO:0006355">
    <property type="term" value="P:regulation of DNA-templated transcription"/>
    <property type="evidence" value="ECO:0007669"/>
    <property type="project" value="InterPro"/>
</dbReference>
<dbReference type="GO" id="GO:0048586">
    <property type="term" value="P:regulation of long-day photoperiodism, flowering"/>
    <property type="evidence" value="ECO:0000316"/>
    <property type="project" value="TAIR"/>
</dbReference>
<dbReference type="CDD" id="cd18983">
    <property type="entry name" value="CBD_MSL3_like"/>
    <property type="match status" value="1"/>
</dbReference>
<dbReference type="FunFam" id="1.10.274.30:FF:000005">
    <property type="entry name" value="Chromatin modification-related protein EAF3"/>
    <property type="match status" value="1"/>
</dbReference>
<dbReference type="FunFam" id="2.30.30.140:FF:000102">
    <property type="entry name" value="Protein MRG1"/>
    <property type="match status" value="1"/>
</dbReference>
<dbReference type="Gene3D" id="2.30.30.140">
    <property type="match status" value="1"/>
</dbReference>
<dbReference type="Gene3D" id="1.10.274.30">
    <property type="entry name" value="MRG domain"/>
    <property type="match status" value="1"/>
</dbReference>
<dbReference type="InterPro" id="IPR016197">
    <property type="entry name" value="Chromo-like_dom_sf"/>
</dbReference>
<dbReference type="InterPro" id="IPR000953">
    <property type="entry name" value="Chromo/chromo_shadow_dom"/>
</dbReference>
<dbReference type="InterPro" id="IPR008676">
    <property type="entry name" value="MRG"/>
</dbReference>
<dbReference type="InterPro" id="IPR038217">
    <property type="entry name" value="MRG_C_sf"/>
</dbReference>
<dbReference type="InterPro" id="IPR026541">
    <property type="entry name" value="MRG_dom"/>
</dbReference>
<dbReference type="InterPro" id="IPR053820">
    <property type="entry name" value="MSL3_chromo-like"/>
</dbReference>
<dbReference type="PANTHER" id="PTHR10880">
    <property type="entry name" value="MORTALITY FACTOR 4-LIKE PROTEIN"/>
    <property type="match status" value="1"/>
</dbReference>
<dbReference type="PANTHER" id="PTHR10880:SF15">
    <property type="entry name" value="MSL COMPLEX SUBUNIT 3"/>
    <property type="match status" value="1"/>
</dbReference>
<dbReference type="Pfam" id="PF05712">
    <property type="entry name" value="MRG"/>
    <property type="match status" value="1"/>
</dbReference>
<dbReference type="Pfam" id="PF22732">
    <property type="entry name" value="MSL3_chromo-like"/>
    <property type="match status" value="1"/>
</dbReference>
<dbReference type="PIRSF" id="PIRSF038133">
    <property type="entry name" value="HAT_Nua4_EAF3/MRG15"/>
    <property type="match status" value="1"/>
</dbReference>
<dbReference type="SMART" id="SM00298">
    <property type="entry name" value="CHROMO"/>
    <property type="match status" value="1"/>
</dbReference>
<dbReference type="SUPFAM" id="SSF54160">
    <property type="entry name" value="Chromo domain-like"/>
    <property type="match status" value="1"/>
</dbReference>
<dbReference type="PROSITE" id="PS51640">
    <property type="entry name" value="MRG"/>
    <property type="match status" value="1"/>
</dbReference>
<proteinExistence type="evidence at protein level"/>